<sequence>MQLLTIGINHHTAPVALRERVAFPLEQIKPALVTFKNVFLGPHAPNAPEAAILSTCNRTELYCATDDRAAREGAIRWLSEYHRIPVDELAPHVYALPQSEAVRHAFRVASGLDSMVLGETQILGQMKDAVRTATEAGALGTYLNQLFQRTFAVAKEVRGTTEIGAQSVSMAAAAVRLAQRIFETVSDQRVLFIGAGEMIELCATHFAAQSPRELVIANRTAERGQRLAERFNGRAMPLSDLPTRMHEFDIIVSCTASTLPIIGLGAVERAVKARRHRPIFMVDLAVPRDIEPEVGKLKDVFLYTVDDLGAIVREGNASRQAAVAQAETIIETRVQNFMQWLDTRSVVPVIRHMHTQADALRRAEVEKAQKLLARGDDPAAVLEALSQALTNKLIHGPTSALNRVNGADRDSLIDLMRGFYQHAPRSNDQSGH</sequence>
<reference key="1">
    <citation type="submission" date="2008-04" db="EMBL/GenBank/DDBJ databases">
        <title>Complete sequence of chromosome 1 of Burkholderia ambifaria MC40-6.</title>
        <authorList>
            <person name="Copeland A."/>
            <person name="Lucas S."/>
            <person name="Lapidus A."/>
            <person name="Glavina del Rio T."/>
            <person name="Dalin E."/>
            <person name="Tice H."/>
            <person name="Pitluck S."/>
            <person name="Chain P."/>
            <person name="Malfatti S."/>
            <person name="Shin M."/>
            <person name="Vergez L."/>
            <person name="Lang D."/>
            <person name="Schmutz J."/>
            <person name="Larimer F."/>
            <person name="Land M."/>
            <person name="Hauser L."/>
            <person name="Kyrpides N."/>
            <person name="Lykidis A."/>
            <person name="Ramette A."/>
            <person name="Konstantinidis K."/>
            <person name="Tiedje J."/>
            <person name="Richardson P."/>
        </authorList>
    </citation>
    <scope>NUCLEOTIDE SEQUENCE [LARGE SCALE GENOMIC DNA]</scope>
    <source>
        <strain>MC40-6</strain>
    </source>
</reference>
<proteinExistence type="inferred from homology"/>
<evidence type="ECO:0000255" key="1">
    <source>
        <dbReference type="HAMAP-Rule" id="MF_00087"/>
    </source>
</evidence>
<protein>
    <recommendedName>
        <fullName evidence="1">Glutamyl-tRNA reductase</fullName>
        <shortName evidence="1">GluTR</shortName>
        <ecNumber evidence="1">1.2.1.70</ecNumber>
    </recommendedName>
</protein>
<keyword id="KW-0521">NADP</keyword>
<keyword id="KW-0560">Oxidoreductase</keyword>
<keyword id="KW-0627">Porphyrin biosynthesis</keyword>
<feature type="chain" id="PRO_1000093115" description="Glutamyl-tRNA reductase">
    <location>
        <begin position="1"/>
        <end position="432"/>
    </location>
</feature>
<feature type="active site" description="Nucleophile" evidence="1">
    <location>
        <position position="56"/>
    </location>
</feature>
<feature type="binding site" evidence="1">
    <location>
        <begin position="55"/>
        <end position="58"/>
    </location>
    <ligand>
        <name>substrate</name>
    </ligand>
</feature>
<feature type="binding site" evidence="1">
    <location>
        <position position="114"/>
    </location>
    <ligand>
        <name>substrate</name>
    </ligand>
</feature>
<feature type="binding site" evidence="1">
    <location>
        <begin position="119"/>
        <end position="121"/>
    </location>
    <ligand>
        <name>substrate</name>
    </ligand>
</feature>
<feature type="binding site" evidence="1">
    <location>
        <position position="125"/>
    </location>
    <ligand>
        <name>substrate</name>
    </ligand>
</feature>
<feature type="binding site" evidence="1">
    <location>
        <begin position="194"/>
        <end position="199"/>
    </location>
    <ligand>
        <name>NADP(+)</name>
        <dbReference type="ChEBI" id="CHEBI:58349"/>
    </ligand>
</feature>
<feature type="site" description="Important for activity" evidence="1">
    <location>
        <position position="104"/>
    </location>
</feature>
<name>HEM1_BURA4</name>
<gene>
    <name evidence="1" type="primary">hemA</name>
    <name type="ordered locus">BamMC406_0441</name>
</gene>
<comment type="function">
    <text evidence="1">Catalyzes the NADPH-dependent reduction of glutamyl-tRNA(Glu) to glutamate 1-semialdehyde (GSA).</text>
</comment>
<comment type="catalytic activity">
    <reaction evidence="1">
        <text>(S)-4-amino-5-oxopentanoate + tRNA(Glu) + NADP(+) = L-glutamyl-tRNA(Glu) + NADPH + H(+)</text>
        <dbReference type="Rhea" id="RHEA:12344"/>
        <dbReference type="Rhea" id="RHEA-COMP:9663"/>
        <dbReference type="Rhea" id="RHEA-COMP:9680"/>
        <dbReference type="ChEBI" id="CHEBI:15378"/>
        <dbReference type="ChEBI" id="CHEBI:57501"/>
        <dbReference type="ChEBI" id="CHEBI:57783"/>
        <dbReference type="ChEBI" id="CHEBI:58349"/>
        <dbReference type="ChEBI" id="CHEBI:78442"/>
        <dbReference type="ChEBI" id="CHEBI:78520"/>
        <dbReference type="EC" id="1.2.1.70"/>
    </reaction>
</comment>
<comment type="pathway">
    <text evidence="1">Porphyrin-containing compound metabolism; protoporphyrin-IX biosynthesis; 5-aminolevulinate from L-glutamyl-tRNA(Glu): step 1/2.</text>
</comment>
<comment type="subunit">
    <text evidence="1">Homodimer.</text>
</comment>
<comment type="domain">
    <text evidence="1">Possesses an unusual extended V-shaped dimeric structure with each monomer consisting of three distinct domains arranged along a curved 'spinal' alpha-helix. The N-terminal catalytic domain specifically recognizes the glutamate moiety of the substrate. The second domain is the NADPH-binding domain, and the third C-terminal domain is responsible for dimerization.</text>
</comment>
<comment type="miscellaneous">
    <text evidence="1">During catalysis, the active site Cys acts as a nucleophile attacking the alpha-carbonyl group of tRNA-bound glutamate with the formation of a thioester intermediate between enzyme and glutamate, and the concomitant release of tRNA(Glu). The thioester intermediate is finally reduced by direct hydride transfer from NADPH, to form the product GSA.</text>
</comment>
<comment type="similarity">
    <text evidence="1">Belongs to the glutamyl-tRNA reductase family.</text>
</comment>
<accession>B1YSD6</accession>
<organism>
    <name type="scientific">Burkholderia ambifaria (strain MC40-6)</name>
    <dbReference type="NCBI Taxonomy" id="398577"/>
    <lineage>
        <taxon>Bacteria</taxon>
        <taxon>Pseudomonadati</taxon>
        <taxon>Pseudomonadota</taxon>
        <taxon>Betaproteobacteria</taxon>
        <taxon>Burkholderiales</taxon>
        <taxon>Burkholderiaceae</taxon>
        <taxon>Burkholderia</taxon>
        <taxon>Burkholderia cepacia complex</taxon>
    </lineage>
</organism>
<dbReference type="EC" id="1.2.1.70" evidence="1"/>
<dbReference type="EMBL" id="CP001025">
    <property type="protein sequence ID" value="ACB62938.1"/>
    <property type="molecule type" value="Genomic_DNA"/>
</dbReference>
<dbReference type="RefSeq" id="WP_012362992.1">
    <property type="nucleotide sequence ID" value="NC_010551.1"/>
</dbReference>
<dbReference type="SMR" id="B1YSD6"/>
<dbReference type="KEGG" id="bac:BamMC406_0441"/>
<dbReference type="HOGENOM" id="CLU_035113_2_2_4"/>
<dbReference type="OrthoDB" id="110209at2"/>
<dbReference type="UniPathway" id="UPA00251">
    <property type="reaction ID" value="UER00316"/>
</dbReference>
<dbReference type="Proteomes" id="UP000001680">
    <property type="component" value="Chromosome 1"/>
</dbReference>
<dbReference type="GO" id="GO:0008883">
    <property type="term" value="F:glutamyl-tRNA reductase activity"/>
    <property type="evidence" value="ECO:0007669"/>
    <property type="project" value="UniProtKB-UniRule"/>
</dbReference>
<dbReference type="GO" id="GO:0050661">
    <property type="term" value="F:NADP binding"/>
    <property type="evidence" value="ECO:0007669"/>
    <property type="project" value="InterPro"/>
</dbReference>
<dbReference type="GO" id="GO:0019353">
    <property type="term" value="P:protoporphyrinogen IX biosynthetic process from glutamate"/>
    <property type="evidence" value="ECO:0007669"/>
    <property type="project" value="TreeGrafter"/>
</dbReference>
<dbReference type="CDD" id="cd05213">
    <property type="entry name" value="NAD_bind_Glutamyl_tRNA_reduct"/>
    <property type="match status" value="1"/>
</dbReference>
<dbReference type="FunFam" id="3.30.460.30:FF:000001">
    <property type="entry name" value="Glutamyl-tRNA reductase"/>
    <property type="match status" value="1"/>
</dbReference>
<dbReference type="FunFam" id="3.40.50.720:FF:000031">
    <property type="entry name" value="Glutamyl-tRNA reductase"/>
    <property type="match status" value="1"/>
</dbReference>
<dbReference type="Gene3D" id="3.30.460.30">
    <property type="entry name" value="Glutamyl-tRNA reductase, N-terminal domain"/>
    <property type="match status" value="1"/>
</dbReference>
<dbReference type="Gene3D" id="3.40.50.720">
    <property type="entry name" value="NAD(P)-binding Rossmann-like Domain"/>
    <property type="match status" value="1"/>
</dbReference>
<dbReference type="HAMAP" id="MF_00087">
    <property type="entry name" value="Glu_tRNA_reductase"/>
    <property type="match status" value="1"/>
</dbReference>
<dbReference type="InterPro" id="IPR000343">
    <property type="entry name" value="4pyrrol_synth_GluRdtase"/>
</dbReference>
<dbReference type="InterPro" id="IPR015896">
    <property type="entry name" value="4pyrrol_synth_GluRdtase_dimer"/>
</dbReference>
<dbReference type="InterPro" id="IPR015895">
    <property type="entry name" value="4pyrrol_synth_GluRdtase_N"/>
</dbReference>
<dbReference type="InterPro" id="IPR018214">
    <property type="entry name" value="GluRdtase_CS"/>
</dbReference>
<dbReference type="InterPro" id="IPR036453">
    <property type="entry name" value="GluRdtase_dimer_dom_sf"/>
</dbReference>
<dbReference type="InterPro" id="IPR036343">
    <property type="entry name" value="GluRdtase_N_sf"/>
</dbReference>
<dbReference type="InterPro" id="IPR036291">
    <property type="entry name" value="NAD(P)-bd_dom_sf"/>
</dbReference>
<dbReference type="InterPro" id="IPR006151">
    <property type="entry name" value="Shikm_DH/Glu-tRNA_Rdtase"/>
</dbReference>
<dbReference type="NCBIfam" id="TIGR01035">
    <property type="entry name" value="hemA"/>
    <property type="match status" value="1"/>
</dbReference>
<dbReference type="PANTHER" id="PTHR43013">
    <property type="entry name" value="GLUTAMYL-TRNA REDUCTASE"/>
    <property type="match status" value="1"/>
</dbReference>
<dbReference type="PANTHER" id="PTHR43013:SF1">
    <property type="entry name" value="GLUTAMYL-TRNA REDUCTASE"/>
    <property type="match status" value="1"/>
</dbReference>
<dbReference type="Pfam" id="PF00745">
    <property type="entry name" value="GlutR_dimer"/>
    <property type="match status" value="1"/>
</dbReference>
<dbReference type="Pfam" id="PF05201">
    <property type="entry name" value="GlutR_N"/>
    <property type="match status" value="1"/>
</dbReference>
<dbReference type="Pfam" id="PF01488">
    <property type="entry name" value="Shikimate_DH"/>
    <property type="match status" value="1"/>
</dbReference>
<dbReference type="PIRSF" id="PIRSF000445">
    <property type="entry name" value="4pyrrol_synth_GluRdtase"/>
    <property type="match status" value="1"/>
</dbReference>
<dbReference type="SUPFAM" id="SSF69742">
    <property type="entry name" value="Glutamyl tRNA-reductase catalytic, N-terminal domain"/>
    <property type="match status" value="1"/>
</dbReference>
<dbReference type="SUPFAM" id="SSF69075">
    <property type="entry name" value="Glutamyl tRNA-reductase dimerization domain"/>
    <property type="match status" value="1"/>
</dbReference>
<dbReference type="SUPFAM" id="SSF51735">
    <property type="entry name" value="NAD(P)-binding Rossmann-fold domains"/>
    <property type="match status" value="1"/>
</dbReference>
<dbReference type="PROSITE" id="PS00747">
    <property type="entry name" value="GLUTR"/>
    <property type="match status" value="1"/>
</dbReference>